<keyword id="KW-1185">Reference proteome</keyword>
<keyword id="KW-0687">Ribonucleoprotein</keyword>
<keyword id="KW-0689">Ribosomal protein</keyword>
<keyword id="KW-0694">RNA-binding</keyword>
<keyword id="KW-0699">rRNA-binding</keyword>
<reference key="1">
    <citation type="journal article" date="2003" name="J. Bacteriol.">
        <title>Comparative analyses of the complete genome sequences of Pierce's disease and citrus variegated chlorosis strains of Xylella fastidiosa.</title>
        <authorList>
            <person name="Van Sluys M.A."/>
            <person name="de Oliveira M.C."/>
            <person name="Monteiro-Vitorello C.B."/>
            <person name="Miyaki C.Y."/>
            <person name="Furlan L.R."/>
            <person name="Camargo L.E.A."/>
            <person name="da Silva A.C.R."/>
            <person name="Moon D.H."/>
            <person name="Takita M.A."/>
            <person name="Lemos E.G.M."/>
            <person name="Machado M.A."/>
            <person name="Ferro M.I.T."/>
            <person name="da Silva F.R."/>
            <person name="Goldman M.H.S."/>
            <person name="Goldman G.H."/>
            <person name="Lemos M.V.F."/>
            <person name="El-Dorry H."/>
            <person name="Tsai S.M."/>
            <person name="Carrer H."/>
            <person name="Carraro D.M."/>
            <person name="de Oliveira R.C."/>
            <person name="Nunes L.R."/>
            <person name="Siqueira W.J."/>
            <person name="Coutinho L.L."/>
            <person name="Kimura E.T."/>
            <person name="Ferro E.S."/>
            <person name="Harakava R."/>
            <person name="Kuramae E.E."/>
            <person name="Marino C.L."/>
            <person name="Giglioti E."/>
            <person name="Abreu I.L."/>
            <person name="Alves L.M.C."/>
            <person name="do Amaral A.M."/>
            <person name="Baia G.S."/>
            <person name="Blanco S.R."/>
            <person name="Brito M.S."/>
            <person name="Cannavan F.S."/>
            <person name="Celestino A.V."/>
            <person name="da Cunha A.F."/>
            <person name="Fenille R.C."/>
            <person name="Ferro J.A."/>
            <person name="Formighieri E.F."/>
            <person name="Kishi L.T."/>
            <person name="Leoni S.G."/>
            <person name="Oliveira A.R."/>
            <person name="Rosa V.E. Jr."/>
            <person name="Sassaki F.T."/>
            <person name="Sena J.A.D."/>
            <person name="de Souza A.A."/>
            <person name="Truffi D."/>
            <person name="Tsukumo F."/>
            <person name="Yanai G.M."/>
            <person name="Zaros L.G."/>
            <person name="Civerolo E.L."/>
            <person name="Simpson A.J.G."/>
            <person name="Almeida N.F. Jr."/>
            <person name="Setubal J.C."/>
            <person name="Kitajima J.P."/>
        </authorList>
    </citation>
    <scope>NUCLEOTIDE SEQUENCE [LARGE SCALE GENOMIC DNA]</scope>
    <source>
        <strain>Temecula1 / ATCC 700964</strain>
    </source>
</reference>
<comment type="function">
    <text evidence="1">Binds together with bS18 to 16S ribosomal RNA.</text>
</comment>
<comment type="similarity">
    <text evidence="3">Belongs to the bacterial ribosomal protein bS6 family.</text>
</comment>
<gene>
    <name type="primary">rpsF</name>
    <name type="ordered locus">PD_1945</name>
</gene>
<protein>
    <recommendedName>
        <fullName evidence="3">Small ribosomal subunit protein bS6</fullName>
    </recommendedName>
    <alternativeName>
        <fullName>30S ribosomal protein S6</fullName>
    </alternativeName>
</protein>
<dbReference type="EMBL" id="AE009442">
    <property type="protein sequence ID" value="AAO29775.1"/>
    <property type="molecule type" value="Genomic_DNA"/>
</dbReference>
<dbReference type="RefSeq" id="WP_004090345.1">
    <property type="nucleotide sequence ID" value="NC_004556.1"/>
</dbReference>
<dbReference type="SMR" id="P66605"/>
<dbReference type="GeneID" id="93905806"/>
<dbReference type="KEGG" id="xft:PD_1945"/>
<dbReference type="HOGENOM" id="CLU_113441_6_0_6"/>
<dbReference type="Proteomes" id="UP000002516">
    <property type="component" value="Chromosome"/>
</dbReference>
<dbReference type="GO" id="GO:0022627">
    <property type="term" value="C:cytosolic small ribosomal subunit"/>
    <property type="evidence" value="ECO:0007669"/>
    <property type="project" value="TreeGrafter"/>
</dbReference>
<dbReference type="GO" id="GO:0070181">
    <property type="term" value="F:small ribosomal subunit rRNA binding"/>
    <property type="evidence" value="ECO:0007669"/>
    <property type="project" value="TreeGrafter"/>
</dbReference>
<dbReference type="GO" id="GO:0003735">
    <property type="term" value="F:structural constituent of ribosome"/>
    <property type="evidence" value="ECO:0007669"/>
    <property type="project" value="InterPro"/>
</dbReference>
<dbReference type="GO" id="GO:0006412">
    <property type="term" value="P:translation"/>
    <property type="evidence" value="ECO:0007669"/>
    <property type="project" value="UniProtKB-UniRule"/>
</dbReference>
<dbReference type="CDD" id="cd00473">
    <property type="entry name" value="bS6"/>
    <property type="match status" value="1"/>
</dbReference>
<dbReference type="Gene3D" id="3.30.70.60">
    <property type="match status" value="1"/>
</dbReference>
<dbReference type="HAMAP" id="MF_00360">
    <property type="entry name" value="Ribosomal_bS6"/>
    <property type="match status" value="1"/>
</dbReference>
<dbReference type="InterPro" id="IPR000529">
    <property type="entry name" value="Ribosomal_bS6"/>
</dbReference>
<dbReference type="InterPro" id="IPR035980">
    <property type="entry name" value="Ribosomal_bS6_sf"/>
</dbReference>
<dbReference type="InterPro" id="IPR020814">
    <property type="entry name" value="Ribosomal_S6_plastid/chlpt"/>
</dbReference>
<dbReference type="InterPro" id="IPR014717">
    <property type="entry name" value="Transl_elong_EF1B/ribsomal_bS6"/>
</dbReference>
<dbReference type="NCBIfam" id="TIGR00166">
    <property type="entry name" value="S6"/>
    <property type="match status" value="1"/>
</dbReference>
<dbReference type="PANTHER" id="PTHR21011">
    <property type="entry name" value="MITOCHONDRIAL 28S RIBOSOMAL PROTEIN S6"/>
    <property type="match status" value="1"/>
</dbReference>
<dbReference type="PANTHER" id="PTHR21011:SF1">
    <property type="entry name" value="SMALL RIBOSOMAL SUBUNIT PROTEIN BS6M"/>
    <property type="match status" value="1"/>
</dbReference>
<dbReference type="Pfam" id="PF01250">
    <property type="entry name" value="Ribosomal_S6"/>
    <property type="match status" value="1"/>
</dbReference>
<dbReference type="SUPFAM" id="SSF54995">
    <property type="entry name" value="Ribosomal protein S6"/>
    <property type="match status" value="1"/>
</dbReference>
<feature type="chain" id="PRO_0000176880" description="Small ribosomal subunit protein bS6">
    <location>
        <begin position="1"/>
        <end position="143"/>
    </location>
</feature>
<feature type="region of interest" description="Disordered" evidence="2">
    <location>
        <begin position="95"/>
        <end position="143"/>
    </location>
</feature>
<feature type="compositionally biased region" description="Basic and acidic residues" evidence="2">
    <location>
        <begin position="105"/>
        <end position="121"/>
    </location>
</feature>
<name>RS6_XYLFT</name>
<sequence length="143" mass="16468">MGRHYEIVLLVHPDQSEQVQAMLERYKALIENGHGKIHRLEDWGRRQLAYPIQKLVKAHYLMMNIEVEQSVLNELVDLFRFNDAILRHLAIKRSGPDTEQSFIMKSKDDKGDKPERRRRDDDENGDVGVSNDSDNDGGNAEAA</sequence>
<evidence type="ECO:0000250" key="1"/>
<evidence type="ECO:0000256" key="2">
    <source>
        <dbReference type="SAM" id="MobiDB-lite"/>
    </source>
</evidence>
<evidence type="ECO:0000305" key="3"/>
<organism>
    <name type="scientific">Xylella fastidiosa (strain Temecula1 / ATCC 700964)</name>
    <dbReference type="NCBI Taxonomy" id="183190"/>
    <lineage>
        <taxon>Bacteria</taxon>
        <taxon>Pseudomonadati</taxon>
        <taxon>Pseudomonadota</taxon>
        <taxon>Gammaproteobacteria</taxon>
        <taxon>Lysobacterales</taxon>
        <taxon>Lysobacteraceae</taxon>
        <taxon>Xylella</taxon>
    </lineage>
</organism>
<proteinExistence type="inferred from homology"/>
<accession>P66605</accession>
<accession>Q9PAF7</accession>